<comment type="function">
    <text evidence="1">One of the primary rRNA binding proteins, it binds directly to 16S rRNA central domain where it helps coordinate assembly of the platform of the 30S subunit.</text>
</comment>
<comment type="subunit">
    <text evidence="1">Part of the 30S ribosomal subunit.</text>
</comment>
<comment type="subcellular location">
    <subcellularLocation>
        <location>Plastid</location>
        <location>Chloroplast</location>
    </subcellularLocation>
</comment>
<comment type="similarity">
    <text evidence="2">Belongs to the universal ribosomal protein uS8 family.</text>
</comment>
<reference key="1">
    <citation type="journal article" date="2007" name="Theor. Appl. Genet.">
        <title>Complete chloroplast genome sequences of Hordeum vulgare, Sorghum bicolor and Agrostis stolonifera, and comparative analyses with other grass genomes.</title>
        <authorList>
            <person name="Saski C."/>
            <person name="Lee S.-B."/>
            <person name="Fjellheim S."/>
            <person name="Guda C."/>
            <person name="Jansen R.K."/>
            <person name="Luo H."/>
            <person name="Tomkins J."/>
            <person name="Rognli O.A."/>
            <person name="Daniell H."/>
            <person name="Clarke J.L."/>
        </authorList>
    </citation>
    <scope>NUCLEOTIDE SEQUENCE [LARGE SCALE GENOMIC DNA]</scope>
    <source>
        <strain>cv. BTx623</strain>
    </source>
</reference>
<name>RR8_SORBI</name>
<evidence type="ECO:0000250" key="1"/>
<evidence type="ECO:0000305" key="2"/>
<gene>
    <name type="primary">rps8</name>
</gene>
<accession>A1E9W0</accession>
<keyword id="KW-0150">Chloroplast</keyword>
<keyword id="KW-0934">Plastid</keyword>
<keyword id="KW-1185">Reference proteome</keyword>
<keyword id="KW-0687">Ribonucleoprotein</keyword>
<keyword id="KW-0689">Ribosomal protein</keyword>
<keyword id="KW-0694">RNA-binding</keyword>
<keyword id="KW-0699">rRNA-binding</keyword>
<organism>
    <name type="scientific">Sorghum bicolor</name>
    <name type="common">Sorghum</name>
    <name type="synonym">Sorghum vulgare</name>
    <dbReference type="NCBI Taxonomy" id="4558"/>
    <lineage>
        <taxon>Eukaryota</taxon>
        <taxon>Viridiplantae</taxon>
        <taxon>Streptophyta</taxon>
        <taxon>Embryophyta</taxon>
        <taxon>Tracheophyta</taxon>
        <taxon>Spermatophyta</taxon>
        <taxon>Magnoliopsida</taxon>
        <taxon>Liliopsida</taxon>
        <taxon>Poales</taxon>
        <taxon>Poaceae</taxon>
        <taxon>PACMAD clade</taxon>
        <taxon>Panicoideae</taxon>
        <taxon>Andropogonodae</taxon>
        <taxon>Andropogoneae</taxon>
        <taxon>Sorghinae</taxon>
        <taxon>Sorghum</taxon>
    </lineage>
</organism>
<feature type="chain" id="PRO_0000276732" description="Small ribosomal subunit protein uS8c">
    <location>
        <begin position="1"/>
        <end position="136"/>
    </location>
</feature>
<sequence>MGKDTIADLLTSIRNADMNKKGTVRVVSTNITENIVKILLREGFIESVRKHQESNRYFLVSTLRHQRRKTRKGIYRTRTFLKRISRPGLRIYANYQGIPKVLGGMGIAILSTSRGIMTDREARLNRIGGEVLCYIW</sequence>
<protein>
    <recommendedName>
        <fullName evidence="2">Small ribosomal subunit protein uS8c</fullName>
    </recommendedName>
    <alternativeName>
        <fullName>30S ribosomal protein S8, chloroplastic</fullName>
    </alternativeName>
</protein>
<proteinExistence type="inferred from homology"/>
<geneLocation type="chloroplast"/>
<dbReference type="EMBL" id="EF115542">
    <property type="protein sequence ID" value="ABK79531.1"/>
    <property type="molecule type" value="Genomic_DNA"/>
</dbReference>
<dbReference type="RefSeq" id="YP_899443.1">
    <property type="nucleotide sequence ID" value="NC_008602.1"/>
</dbReference>
<dbReference type="SMR" id="A1E9W0"/>
<dbReference type="FunCoup" id="A1E9W0">
    <property type="interactions" value="167"/>
</dbReference>
<dbReference type="STRING" id="4558.A1E9W0"/>
<dbReference type="GeneID" id="4549087"/>
<dbReference type="KEGG" id="sbi:4549087"/>
<dbReference type="InParanoid" id="A1E9W0"/>
<dbReference type="OrthoDB" id="591253at2759"/>
<dbReference type="Proteomes" id="UP000000768">
    <property type="component" value="Chloroplast"/>
</dbReference>
<dbReference type="ExpressionAtlas" id="A1E9W0">
    <property type="expression patterns" value="baseline"/>
</dbReference>
<dbReference type="GO" id="GO:0009507">
    <property type="term" value="C:chloroplast"/>
    <property type="evidence" value="ECO:0007669"/>
    <property type="project" value="UniProtKB-SubCell"/>
</dbReference>
<dbReference type="GO" id="GO:1990904">
    <property type="term" value="C:ribonucleoprotein complex"/>
    <property type="evidence" value="ECO:0007669"/>
    <property type="project" value="UniProtKB-KW"/>
</dbReference>
<dbReference type="GO" id="GO:0005840">
    <property type="term" value="C:ribosome"/>
    <property type="evidence" value="ECO:0007669"/>
    <property type="project" value="UniProtKB-KW"/>
</dbReference>
<dbReference type="GO" id="GO:0019843">
    <property type="term" value="F:rRNA binding"/>
    <property type="evidence" value="ECO:0007669"/>
    <property type="project" value="UniProtKB-UniRule"/>
</dbReference>
<dbReference type="GO" id="GO:0003735">
    <property type="term" value="F:structural constituent of ribosome"/>
    <property type="evidence" value="ECO:0000318"/>
    <property type="project" value="GO_Central"/>
</dbReference>
<dbReference type="GO" id="GO:0006412">
    <property type="term" value="P:translation"/>
    <property type="evidence" value="ECO:0007669"/>
    <property type="project" value="UniProtKB-UniRule"/>
</dbReference>
<dbReference type="FunFam" id="3.30.1490.10:FF:000001">
    <property type="entry name" value="30S ribosomal protein S8"/>
    <property type="match status" value="1"/>
</dbReference>
<dbReference type="FunFam" id="3.30.1370.30:FF:000004">
    <property type="entry name" value="30S ribosomal protein S8, chloroplastic"/>
    <property type="match status" value="1"/>
</dbReference>
<dbReference type="Gene3D" id="3.30.1370.30">
    <property type="match status" value="1"/>
</dbReference>
<dbReference type="Gene3D" id="3.30.1490.10">
    <property type="match status" value="1"/>
</dbReference>
<dbReference type="HAMAP" id="MF_01302_B">
    <property type="entry name" value="Ribosomal_uS8_B"/>
    <property type="match status" value="1"/>
</dbReference>
<dbReference type="InterPro" id="IPR000630">
    <property type="entry name" value="Ribosomal_uS8"/>
</dbReference>
<dbReference type="InterPro" id="IPR047863">
    <property type="entry name" value="Ribosomal_uS8_CS"/>
</dbReference>
<dbReference type="InterPro" id="IPR035987">
    <property type="entry name" value="Ribosomal_uS8_sf"/>
</dbReference>
<dbReference type="NCBIfam" id="NF001109">
    <property type="entry name" value="PRK00136.1"/>
    <property type="match status" value="1"/>
</dbReference>
<dbReference type="PANTHER" id="PTHR11758">
    <property type="entry name" value="40S RIBOSOMAL PROTEIN S15A"/>
    <property type="match status" value="1"/>
</dbReference>
<dbReference type="Pfam" id="PF00410">
    <property type="entry name" value="Ribosomal_S8"/>
    <property type="match status" value="1"/>
</dbReference>
<dbReference type="SUPFAM" id="SSF56047">
    <property type="entry name" value="Ribosomal protein S8"/>
    <property type="match status" value="1"/>
</dbReference>
<dbReference type="PROSITE" id="PS00053">
    <property type="entry name" value="RIBOSOMAL_S8"/>
    <property type="match status" value="1"/>
</dbReference>